<evidence type="ECO:0000255" key="1">
    <source>
        <dbReference type="HAMAP-Rule" id="MF_00220"/>
    </source>
</evidence>
<reference key="1">
    <citation type="journal article" date="2002" name="Proc. Natl. Acad. Sci. U.S.A.">
        <title>Genome sequence of a serotype M3 strain of group A Streptococcus: phage-encoded toxins, the high-virulence phenotype, and clone emergence.</title>
        <authorList>
            <person name="Beres S.B."/>
            <person name="Sylva G.L."/>
            <person name="Barbian K.D."/>
            <person name="Lei B."/>
            <person name="Hoff J.S."/>
            <person name="Mammarella N.D."/>
            <person name="Liu M.-Y."/>
            <person name="Smoot J.C."/>
            <person name="Porcella S.F."/>
            <person name="Parkins L.D."/>
            <person name="Campbell D.S."/>
            <person name="Smith T.M."/>
            <person name="McCormick J.K."/>
            <person name="Leung D.Y.M."/>
            <person name="Schlievert P.M."/>
            <person name="Musser J.M."/>
        </authorList>
    </citation>
    <scope>NUCLEOTIDE SEQUENCE [LARGE SCALE GENOMIC DNA]</scope>
    <source>
        <strain>ATCC BAA-595 / MGAS315</strain>
    </source>
</reference>
<organism>
    <name type="scientific">Streptococcus pyogenes serotype M3 (strain ATCC BAA-595 / MGAS315)</name>
    <dbReference type="NCBI Taxonomy" id="198466"/>
    <lineage>
        <taxon>Bacteria</taxon>
        <taxon>Bacillati</taxon>
        <taxon>Bacillota</taxon>
        <taxon>Bacilli</taxon>
        <taxon>Lactobacillales</taxon>
        <taxon>Streptococcaceae</taxon>
        <taxon>Streptococcus</taxon>
    </lineage>
</organism>
<sequence length="422" mass="45248">MILIKNGRVMDPKSQRDQVADVLIDGKQIVKIASAIECQEAQVIDASGLIVAPGLVDIHVHFREPGQTHKEDIHTGALAAAAGGVTTVVMMANTNPVISDVETLQEVLASAAKEKIHIYTNASVTQAFNGKDVTDFKALLEAGAVSFSDDGIPLESSKVLKEAFDLANANQTFISLHEEDPQLNGVLGFNEGIAEEHFHFCGATGVAEYSMIARDVMIAYDRQAHVHIQHLSKAESVQVVAFAQQLGAKVTAEVSPQHFSTTEDLLLTAGTSAKMNPPLRTQRDRLAVIEGLKSGVITVIATDHAPHHKDEKAVDDMTKAPSGMTGLETSLSLGLTHLVEPGHLTLMSLLEKMTLNPALLYGFDAGYLAENGPADLVIFADKQERLITENFASKASNSPFIGNKLKGVVKYTIADGEVVYPN</sequence>
<accession>P0DD64</accession>
<accession>Q7CF73</accession>
<accession>Q8P1B5</accession>
<comment type="function">
    <text evidence="1">Catalyzes the reversible cyclization of carbamoyl aspartate to dihydroorotate.</text>
</comment>
<comment type="catalytic activity">
    <reaction evidence="1">
        <text>(S)-dihydroorotate + H2O = N-carbamoyl-L-aspartate + H(+)</text>
        <dbReference type="Rhea" id="RHEA:24296"/>
        <dbReference type="ChEBI" id="CHEBI:15377"/>
        <dbReference type="ChEBI" id="CHEBI:15378"/>
        <dbReference type="ChEBI" id="CHEBI:30864"/>
        <dbReference type="ChEBI" id="CHEBI:32814"/>
        <dbReference type="EC" id="3.5.2.3"/>
    </reaction>
</comment>
<comment type="cofactor">
    <cofactor evidence="1">
        <name>Zn(2+)</name>
        <dbReference type="ChEBI" id="CHEBI:29105"/>
    </cofactor>
    <text evidence="1">Binds 2 Zn(2+) ions per subunit.</text>
</comment>
<comment type="pathway">
    <text evidence="1">Pyrimidine metabolism; UMP biosynthesis via de novo pathway; (S)-dihydroorotate from bicarbonate: step 3/3.</text>
</comment>
<comment type="similarity">
    <text evidence="1">Belongs to the metallo-dependent hydrolases superfamily. DHOase family. Class I DHOase subfamily.</text>
</comment>
<protein>
    <recommendedName>
        <fullName evidence="1">Dihydroorotase</fullName>
        <shortName evidence="1">DHOase</shortName>
        <ecNumber evidence="1">3.5.2.3</ecNumber>
    </recommendedName>
</protein>
<dbReference type="EC" id="3.5.2.3" evidence="1"/>
<dbReference type="EMBL" id="AE014074">
    <property type="protein sequence ID" value="AAM79229.1"/>
    <property type="molecule type" value="Genomic_DNA"/>
</dbReference>
<dbReference type="RefSeq" id="WP_002984912.1">
    <property type="nucleotide sequence ID" value="NC_004070.1"/>
</dbReference>
<dbReference type="SMR" id="P0DD64"/>
<dbReference type="KEGG" id="spg:SpyM3_0622"/>
<dbReference type="HOGENOM" id="CLU_015572_1_0_9"/>
<dbReference type="UniPathway" id="UPA00070">
    <property type="reaction ID" value="UER00117"/>
</dbReference>
<dbReference type="Proteomes" id="UP000000564">
    <property type="component" value="Chromosome"/>
</dbReference>
<dbReference type="GO" id="GO:0005737">
    <property type="term" value="C:cytoplasm"/>
    <property type="evidence" value="ECO:0007669"/>
    <property type="project" value="TreeGrafter"/>
</dbReference>
<dbReference type="GO" id="GO:0004038">
    <property type="term" value="F:allantoinase activity"/>
    <property type="evidence" value="ECO:0007669"/>
    <property type="project" value="TreeGrafter"/>
</dbReference>
<dbReference type="GO" id="GO:0004151">
    <property type="term" value="F:dihydroorotase activity"/>
    <property type="evidence" value="ECO:0007669"/>
    <property type="project" value="UniProtKB-UniRule"/>
</dbReference>
<dbReference type="GO" id="GO:0008270">
    <property type="term" value="F:zinc ion binding"/>
    <property type="evidence" value="ECO:0007669"/>
    <property type="project" value="UniProtKB-UniRule"/>
</dbReference>
<dbReference type="GO" id="GO:0044205">
    <property type="term" value="P:'de novo' UMP biosynthetic process"/>
    <property type="evidence" value="ECO:0007669"/>
    <property type="project" value="UniProtKB-UniRule"/>
</dbReference>
<dbReference type="GO" id="GO:0006145">
    <property type="term" value="P:purine nucleobase catabolic process"/>
    <property type="evidence" value="ECO:0007669"/>
    <property type="project" value="TreeGrafter"/>
</dbReference>
<dbReference type="CDD" id="cd01317">
    <property type="entry name" value="DHOase_IIa"/>
    <property type="match status" value="1"/>
</dbReference>
<dbReference type="Gene3D" id="3.20.20.140">
    <property type="entry name" value="Metal-dependent hydrolases"/>
    <property type="match status" value="1"/>
</dbReference>
<dbReference type="HAMAP" id="MF_00220_B">
    <property type="entry name" value="PyrC_classI_B"/>
    <property type="match status" value="1"/>
</dbReference>
<dbReference type="InterPro" id="IPR006680">
    <property type="entry name" value="Amidohydro-rel"/>
</dbReference>
<dbReference type="InterPro" id="IPR004722">
    <property type="entry name" value="DHOase"/>
</dbReference>
<dbReference type="InterPro" id="IPR050138">
    <property type="entry name" value="DHOase/Allantoinase_Hydrolase"/>
</dbReference>
<dbReference type="InterPro" id="IPR002195">
    <property type="entry name" value="Dihydroorotase_CS"/>
</dbReference>
<dbReference type="InterPro" id="IPR011059">
    <property type="entry name" value="Metal-dep_hydrolase_composite"/>
</dbReference>
<dbReference type="InterPro" id="IPR032466">
    <property type="entry name" value="Metal_Hydrolase"/>
</dbReference>
<dbReference type="NCBIfam" id="NF006839">
    <property type="entry name" value="PRK09357.1-4"/>
    <property type="match status" value="1"/>
</dbReference>
<dbReference type="NCBIfam" id="TIGR00857">
    <property type="entry name" value="pyrC_multi"/>
    <property type="match status" value="1"/>
</dbReference>
<dbReference type="PANTHER" id="PTHR43668">
    <property type="entry name" value="ALLANTOINASE"/>
    <property type="match status" value="1"/>
</dbReference>
<dbReference type="PANTHER" id="PTHR43668:SF2">
    <property type="entry name" value="ALLANTOINASE"/>
    <property type="match status" value="1"/>
</dbReference>
<dbReference type="Pfam" id="PF01979">
    <property type="entry name" value="Amidohydro_1"/>
    <property type="match status" value="1"/>
</dbReference>
<dbReference type="SUPFAM" id="SSF51338">
    <property type="entry name" value="Composite domain of metallo-dependent hydrolases"/>
    <property type="match status" value="1"/>
</dbReference>
<dbReference type="SUPFAM" id="SSF51556">
    <property type="entry name" value="Metallo-dependent hydrolases"/>
    <property type="match status" value="1"/>
</dbReference>
<dbReference type="PROSITE" id="PS00482">
    <property type="entry name" value="DIHYDROOROTASE_1"/>
    <property type="match status" value="1"/>
</dbReference>
<dbReference type="PROSITE" id="PS00483">
    <property type="entry name" value="DIHYDROOROTASE_2"/>
    <property type="match status" value="1"/>
</dbReference>
<name>PYRC_STRP3</name>
<keyword id="KW-0378">Hydrolase</keyword>
<keyword id="KW-0479">Metal-binding</keyword>
<keyword id="KW-0665">Pyrimidine biosynthesis</keyword>
<keyword id="KW-0862">Zinc</keyword>
<feature type="chain" id="PRO_0000147258" description="Dihydroorotase">
    <location>
        <begin position="1"/>
        <end position="422"/>
    </location>
</feature>
<feature type="active site" evidence="1">
    <location>
        <position position="303"/>
    </location>
</feature>
<feature type="binding site" evidence="1">
    <location>
        <position position="59"/>
    </location>
    <ligand>
        <name>Zn(2+)</name>
        <dbReference type="ChEBI" id="CHEBI:29105"/>
        <label>1</label>
    </ligand>
</feature>
<feature type="binding site" evidence="1">
    <location>
        <begin position="61"/>
        <end position="63"/>
    </location>
    <ligand>
        <name>substrate</name>
    </ligand>
</feature>
<feature type="binding site" evidence="1">
    <location>
        <position position="61"/>
    </location>
    <ligand>
        <name>Zn(2+)</name>
        <dbReference type="ChEBI" id="CHEBI:29105"/>
        <label>1</label>
    </ligand>
</feature>
<feature type="binding site" evidence="1">
    <location>
        <position position="93"/>
    </location>
    <ligand>
        <name>substrate</name>
    </ligand>
</feature>
<feature type="binding site" evidence="1">
    <location>
        <position position="150"/>
    </location>
    <ligand>
        <name>Zn(2+)</name>
        <dbReference type="ChEBI" id="CHEBI:29105"/>
        <label>1</label>
    </ligand>
</feature>
<feature type="binding site" evidence="1">
    <location>
        <position position="150"/>
    </location>
    <ligand>
        <name>Zn(2+)</name>
        <dbReference type="ChEBI" id="CHEBI:29105"/>
        <label>2</label>
    </ligand>
</feature>
<feature type="binding site" evidence="1">
    <location>
        <position position="177"/>
    </location>
    <ligand>
        <name>Zn(2+)</name>
        <dbReference type="ChEBI" id="CHEBI:29105"/>
        <label>2</label>
    </ligand>
</feature>
<feature type="binding site" evidence="1">
    <location>
        <position position="230"/>
    </location>
    <ligand>
        <name>Zn(2+)</name>
        <dbReference type="ChEBI" id="CHEBI:29105"/>
        <label>2</label>
    </ligand>
</feature>
<feature type="binding site" evidence="1">
    <location>
        <position position="276"/>
    </location>
    <ligand>
        <name>substrate</name>
    </ligand>
</feature>
<feature type="binding site" evidence="1">
    <location>
        <position position="303"/>
    </location>
    <ligand>
        <name>Zn(2+)</name>
        <dbReference type="ChEBI" id="CHEBI:29105"/>
        <label>1</label>
    </ligand>
</feature>
<feature type="binding site" evidence="1">
    <location>
        <position position="307"/>
    </location>
    <ligand>
        <name>substrate</name>
    </ligand>
</feature>
<gene>
    <name evidence="1" type="primary">pyrC</name>
    <name type="ordered locus">SpyM3_0622</name>
</gene>
<proteinExistence type="inferred from homology"/>